<proteinExistence type="inferred from homology"/>
<comment type="function">
    <text evidence="1">E2 conjugating enzyme required for the cytoplasm to vacuole transport (Cvt) and autophagy. Required for selective autophagic degradation of the nucleus (nucleophagy) as well as for mitophagy which contributes to regulate mitochondrial quantity and quality by eliminating the mitochondria to a basal level to fulfill cellular energy requirements and preventing excess ROS production. Responsible for the E2-like covalent binding of phosphatidylethanolamine to the C-terminal Gly of atg8. The atg12-atg5 conjugate plays a role of an E3 and promotes the transfer of atg8 from atg3 to phosphatidylethanolamine (PE). This step is required for the membrane association of atg8. The formation of the atg8-phosphatidylethanolamine conjugate is essential for autophagy and for the cytoplasm to vacuole transport (Cvt). The atg8-PE conjugate mediates tethering between adjacent membranes and stimulates membrane hemifusion, leading to expansion of the autophagosomal membrane during autophagy (By similarity).</text>
</comment>
<comment type="subunit">
    <text evidence="1">Monomer. Interacts with atg8 through an intermediate thioester bond through the C-terminal Gly of atg8. Also interacts with the 40 amino acid C-terminal region of the E1-like atg7 enzyme. Also interacts with the atg12-atg5 conjugate.</text>
</comment>
<comment type="subcellular location">
    <subcellularLocation>
        <location evidence="1">Cytoplasm</location>
    </subcellularLocation>
</comment>
<comment type="domain">
    <text evidence="1">The N-terminal region is involved in phosphatidylethanolamine-binding and is required for atg8-PE conjugation.</text>
</comment>
<comment type="domain">
    <text evidence="1">The flexible region (FR) is required for atg7-binding.</text>
</comment>
<comment type="domain">
    <text evidence="1">The handle region (HR) contains the atg8 interaction motif (AIM) and mediates binding to atg8. It is crucial for the cytoplasm-to-vacuole targeting pathway (By similarity).</text>
</comment>
<comment type="similarity">
    <text evidence="3">Belongs to the ATG3 family.</text>
</comment>
<comment type="sequence caution" evidence="3">
    <conflict type="erroneous gene model prediction">
        <sequence resource="EMBL-CDS" id="EAA61233"/>
    </conflict>
    <text>The predicted gene AN7718 has been split into 2 genes: AN11004 and AN11006.</text>
</comment>
<feature type="chain" id="PRO_0000413954" description="Autophagy-related protein 3">
    <location>
        <begin position="1"/>
        <end position="365"/>
    </location>
</feature>
<feature type="region of interest" description="Flexible region" evidence="1">
    <location>
        <begin position="85"/>
        <end position="176"/>
    </location>
</feature>
<feature type="region of interest" description="Disordered" evidence="2">
    <location>
        <begin position="103"/>
        <end position="160"/>
    </location>
</feature>
<feature type="region of interest" description="Handle region" evidence="1">
    <location>
        <begin position="251"/>
        <end position="341"/>
    </location>
</feature>
<feature type="region of interest" description="Disordered" evidence="2">
    <location>
        <begin position="272"/>
        <end position="291"/>
    </location>
</feature>
<feature type="compositionally biased region" description="Basic and acidic residues" evidence="2">
    <location>
        <begin position="125"/>
        <end position="144"/>
    </location>
</feature>
<feature type="compositionally biased region" description="Acidic residues" evidence="2">
    <location>
        <begin position="145"/>
        <end position="160"/>
    </location>
</feature>
<feature type="active site" description="Glycyl thioester intermediate" evidence="1">
    <location>
        <position position="247"/>
    </location>
</feature>
<sequence>MNILHSTLSTWRDRLAPVSRTSTFRTTGQITPEEFVLAGDYLVYKFPSWSWGDASSPSKRVSYLPPGKQFLVTRGVPCHRRLNENFAGDAHLDDEIVRDFLSGGAGDSDGGDDNDGWLRTGGGGKRHESTIRDVRTVDESGKEEAEVEEEEDIPDMEDDDDEEAIIREPAGTTSTTQPTRTYNLYITYSNFYRTPRLYLSGYLSPSEPLPPKLMMEDIVGDYKDKTVTLEDFPWFDGSLQMASVHPCRHASVMKTLLDRADAALKLRREKIKQTAASSSPQEKAKLAQPESGLEGLVDDIKGLSLGDAQKQCQGDKGQAGGDEWEVLQHDEEEEVAIRVDQYLVVFLKFIASVTPGIEHDFTMGV</sequence>
<name>ATG3_EMENI</name>
<keyword id="KW-0072">Autophagy</keyword>
<keyword id="KW-0963">Cytoplasm</keyword>
<keyword id="KW-0653">Protein transport</keyword>
<keyword id="KW-1185">Reference proteome</keyword>
<keyword id="KW-0813">Transport</keyword>
<keyword id="KW-0833">Ubl conjugation pathway</keyword>
<protein>
    <recommendedName>
        <fullName>Autophagy-related protein 3</fullName>
    </recommendedName>
    <alternativeName>
        <fullName>Autophagy-related E2-like conjugation enzyme atg3</fullName>
    </alternativeName>
</protein>
<evidence type="ECO:0000250" key="1"/>
<evidence type="ECO:0000256" key="2">
    <source>
        <dbReference type="SAM" id="MobiDB-lite"/>
    </source>
</evidence>
<evidence type="ECO:0000305" key="3"/>
<organism>
    <name type="scientific">Emericella nidulans (strain FGSC A4 / ATCC 38163 / CBS 112.46 / NRRL 194 / M139)</name>
    <name type="common">Aspergillus nidulans</name>
    <dbReference type="NCBI Taxonomy" id="227321"/>
    <lineage>
        <taxon>Eukaryota</taxon>
        <taxon>Fungi</taxon>
        <taxon>Dikarya</taxon>
        <taxon>Ascomycota</taxon>
        <taxon>Pezizomycotina</taxon>
        <taxon>Eurotiomycetes</taxon>
        <taxon>Eurotiomycetidae</taxon>
        <taxon>Eurotiales</taxon>
        <taxon>Aspergillaceae</taxon>
        <taxon>Aspergillus</taxon>
        <taxon>Aspergillus subgen. Nidulantes</taxon>
    </lineage>
</organism>
<accession>C8VDI2</accession>
<accession>Q5AVG2</accession>
<dbReference type="EMBL" id="AACD01000131">
    <property type="protein sequence ID" value="EAA61233.1"/>
    <property type="status" value="ALT_SEQ"/>
    <property type="molecule type" value="Genomic_DNA"/>
</dbReference>
<dbReference type="EMBL" id="BN001304">
    <property type="protein sequence ID" value="CBF79968.1"/>
    <property type="molecule type" value="Genomic_DNA"/>
</dbReference>
<dbReference type="RefSeq" id="XP_680987.1">
    <property type="nucleotide sequence ID" value="XM_675895.1"/>
</dbReference>
<dbReference type="SMR" id="C8VDI2"/>
<dbReference type="FunCoup" id="C8VDI2">
    <property type="interactions" value="1051"/>
</dbReference>
<dbReference type="STRING" id="227321.C8VDI2"/>
<dbReference type="EnsemblFungi" id="CBF79968">
    <property type="protein sequence ID" value="CBF79968"/>
    <property type="gene ID" value="ANIA_11004"/>
</dbReference>
<dbReference type="KEGG" id="ani:ANIA_11004"/>
<dbReference type="VEuPathDB" id="FungiDB:AN11004"/>
<dbReference type="eggNOG" id="KOG2981">
    <property type="taxonomic scope" value="Eukaryota"/>
</dbReference>
<dbReference type="HOGENOM" id="CLU_356391_0_0_1"/>
<dbReference type="InParanoid" id="C8VDI2"/>
<dbReference type="OMA" id="HCPTWSW"/>
<dbReference type="OrthoDB" id="1584384at2759"/>
<dbReference type="Proteomes" id="UP000000560">
    <property type="component" value="Chromosome IV"/>
</dbReference>
<dbReference type="GO" id="GO:0005829">
    <property type="term" value="C:cytosol"/>
    <property type="evidence" value="ECO:0000318"/>
    <property type="project" value="GO_Central"/>
</dbReference>
<dbReference type="GO" id="GO:0005739">
    <property type="term" value="C:mitochondrion"/>
    <property type="evidence" value="ECO:0007669"/>
    <property type="project" value="EnsemblFungi"/>
</dbReference>
<dbReference type="GO" id="GO:0061908">
    <property type="term" value="C:phagophore"/>
    <property type="evidence" value="ECO:0007669"/>
    <property type="project" value="EnsemblFungi"/>
</dbReference>
<dbReference type="GO" id="GO:0000407">
    <property type="term" value="C:phagophore assembly site"/>
    <property type="evidence" value="ECO:0000318"/>
    <property type="project" value="GO_Central"/>
</dbReference>
<dbReference type="GO" id="GO:0141046">
    <property type="term" value="F:Atg8-family conjugating enzyme activity"/>
    <property type="evidence" value="ECO:0000318"/>
    <property type="project" value="GO_Central"/>
</dbReference>
<dbReference type="GO" id="GO:0019776">
    <property type="term" value="F:Atg8-family ligase activity"/>
    <property type="evidence" value="ECO:0007669"/>
    <property type="project" value="EnsemblFungi"/>
</dbReference>
<dbReference type="GO" id="GO:0000045">
    <property type="term" value="P:autophagosome assembly"/>
    <property type="evidence" value="ECO:0000318"/>
    <property type="project" value="GO_Central"/>
</dbReference>
<dbReference type="GO" id="GO:0000422">
    <property type="term" value="P:autophagy of mitochondrion"/>
    <property type="evidence" value="ECO:0000318"/>
    <property type="project" value="GO_Central"/>
</dbReference>
<dbReference type="GO" id="GO:0061723">
    <property type="term" value="P:glycophagy"/>
    <property type="evidence" value="ECO:0000318"/>
    <property type="project" value="GO_Central"/>
</dbReference>
<dbReference type="GO" id="GO:0044804">
    <property type="term" value="P:nucleophagy"/>
    <property type="evidence" value="ECO:0000318"/>
    <property type="project" value="GO_Central"/>
</dbReference>
<dbReference type="GO" id="GO:0034727">
    <property type="term" value="P:piecemeal microautophagy of the nucleus"/>
    <property type="evidence" value="ECO:0007669"/>
    <property type="project" value="EnsemblFungi"/>
</dbReference>
<dbReference type="GO" id="GO:0006612">
    <property type="term" value="P:protein targeting to membrane"/>
    <property type="evidence" value="ECO:0007669"/>
    <property type="project" value="EnsemblFungi"/>
</dbReference>
<dbReference type="GO" id="GO:0015031">
    <property type="term" value="P:protein transport"/>
    <property type="evidence" value="ECO:0007669"/>
    <property type="project" value="UniProtKB-KW"/>
</dbReference>
<dbReference type="InterPro" id="IPR007135">
    <property type="entry name" value="Atg3/Atg10"/>
</dbReference>
<dbReference type="PANTHER" id="PTHR12866">
    <property type="entry name" value="UBIQUITIN-LIKE-CONJUGATING ENZYME ATG3"/>
    <property type="match status" value="1"/>
</dbReference>
<dbReference type="PANTHER" id="PTHR12866:SF2">
    <property type="entry name" value="UBIQUITIN-LIKE-CONJUGATING ENZYME ATG3"/>
    <property type="match status" value="1"/>
</dbReference>
<dbReference type="Pfam" id="PF03987">
    <property type="entry name" value="Autophagy_act_C"/>
    <property type="match status" value="1"/>
</dbReference>
<gene>
    <name type="primary">atg3</name>
    <name type="ORF">AN11004</name>
</gene>
<reference key="1">
    <citation type="journal article" date="2005" name="Nature">
        <title>Sequencing of Aspergillus nidulans and comparative analysis with A. fumigatus and A. oryzae.</title>
        <authorList>
            <person name="Galagan J.E."/>
            <person name="Calvo S.E."/>
            <person name="Cuomo C."/>
            <person name="Ma L.-J."/>
            <person name="Wortman J.R."/>
            <person name="Batzoglou S."/>
            <person name="Lee S.-I."/>
            <person name="Bastuerkmen M."/>
            <person name="Spevak C.C."/>
            <person name="Clutterbuck J."/>
            <person name="Kapitonov V."/>
            <person name="Jurka J."/>
            <person name="Scazzocchio C."/>
            <person name="Farman M.L."/>
            <person name="Butler J."/>
            <person name="Purcell S."/>
            <person name="Harris S."/>
            <person name="Braus G.H."/>
            <person name="Draht O."/>
            <person name="Busch S."/>
            <person name="D'Enfert C."/>
            <person name="Bouchier C."/>
            <person name="Goldman G.H."/>
            <person name="Bell-Pedersen D."/>
            <person name="Griffiths-Jones S."/>
            <person name="Doonan J.H."/>
            <person name="Yu J."/>
            <person name="Vienken K."/>
            <person name="Pain A."/>
            <person name="Freitag M."/>
            <person name="Selker E.U."/>
            <person name="Archer D.B."/>
            <person name="Penalva M.A."/>
            <person name="Oakley B.R."/>
            <person name="Momany M."/>
            <person name="Tanaka T."/>
            <person name="Kumagai T."/>
            <person name="Asai K."/>
            <person name="Machida M."/>
            <person name="Nierman W.C."/>
            <person name="Denning D.W."/>
            <person name="Caddick M.X."/>
            <person name="Hynes M."/>
            <person name="Paoletti M."/>
            <person name="Fischer R."/>
            <person name="Miller B.L."/>
            <person name="Dyer P.S."/>
            <person name="Sachs M.S."/>
            <person name="Osmani S.A."/>
            <person name="Birren B.W."/>
        </authorList>
    </citation>
    <scope>NUCLEOTIDE SEQUENCE [LARGE SCALE GENOMIC DNA]</scope>
    <source>
        <strain>FGSC A4 / ATCC 38163 / CBS 112.46 / NRRL 194 / M139</strain>
    </source>
</reference>
<reference key="2">
    <citation type="journal article" date="2009" name="Fungal Genet. Biol.">
        <title>The 2008 update of the Aspergillus nidulans genome annotation: a community effort.</title>
        <authorList>
            <person name="Wortman J.R."/>
            <person name="Gilsenan J.M."/>
            <person name="Joardar V."/>
            <person name="Deegan J."/>
            <person name="Clutterbuck J."/>
            <person name="Andersen M.R."/>
            <person name="Archer D."/>
            <person name="Bencina M."/>
            <person name="Braus G."/>
            <person name="Coutinho P."/>
            <person name="von Dohren H."/>
            <person name="Doonan J."/>
            <person name="Driessen A.J."/>
            <person name="Durek P."/>
            <person name="Espeso E."/>
            <person name="Fekete E."/>
            <person name="Flipphi M."/>
            <person name="Estrada C.G."/>
            <person name="Geysens S."/>
            <person name="Goldman G."/>
            <person name="de Groot P.W."/>
            <person name="Hansen K."/>
            <person name="Harris S.D."/>
            <person name="Heinekamp T."/>
            <person name="Helmstaedt K."/>
            <person name="Henrissat B."/>
            <person name="Hofmann G."/>
            <person name="Homan T."/>
            <person name="Horio T."/>
            <person name="Horiuchi H."/>
            <person name="James S."/>
            <person name="Jones M."/>
            <person name="Karaffa L."/>
            <person name="Karanyi Z."/>
            <person name="Kato M."/>
            <person name="Keller N."/>
            <person name="Kelly D.E."/>
            <person name="Kiel J.A."/>
            <person name="Kim J.M."/>
            <person name="van der Klei I.J."/>
            <person name="Klis F.M."/>
            <person name="Kovalchuk A."/>
            <person name="Krasevec N."/>
            <person name="Kubicek C.P."/>
            <person name="Liu B."/>
            <person name="Maccabe A."/>
            <person name="Meyer V."/>
            <person name="Mirabito P."/>
            <person name="Miskei M."/>
            <person name="Mos M."/>
            <person name="Mullins J."/>
            <person name="Nelson D.R."/>
            <person name="Nielsen J."/>
            <person name="Oakley B.R."/>
            <person name="Osmani S.A."/>
            <person name="Pakula T."/>
            <person name="Paszewski A."/>
            <person name="Paulsen I."/>
            <person name="Pilsyk S."/>
            <person name="Pocsi I."/>
            <person name="Punt P.J."/>
            <person name="Ram A.F."/>
            <person name="Ren Q."/>
            <person name="Robellet X."/>
            <person name="Robson G."/>
            <person name="Seiboth B."/>
            <person name="van Solingen P."/>
            <person name="Specht T."/>
            <person name="Sun J."/>
            <person name="Taheri-Talesh N."/>
            <person name="Takeshita N."/>
            <person name="Ussery D."/>
            <person name="vanKuyk P.A."/>
            <person name="Visser H."/>
            <person name="van de Vondervoort P.J."/>
            <person name="de Vries R.P."/>
            <person name="Walton J."/>
            <person name="Xiang X."/>
            <person name="Xiong Y."/>
            <person name="Zeng A.P."/>
            <person name="Brandt B.W."/>
            <person name="Cornell M.J."/>
            <person name="van den Hondel C.A."/>
            <person name="Visser J."/>
            <person name="Oliver S.G."/>
            <person name="Turner G."/>
        </authorList>
    </citation>
    <scope>GENOME REANNOTATION</scope>
    <source>
        <strain>FGSC A4 / ATCC 38163 / CBS 112.46 / NRRL 194 / M139</strain>
    </source>
</reference>